<protein>
    <recommendedName>
        <fullName evidence="1">ATP-dependent 6-phosphofructokinase</fullName>
        <shortName evidence="1">ATP-PFK</shortName>
        <shortName evidence="1">Phosphofructokinase</shortName>
        <ecNumber evidence="1">2.7.1.11</ecNumber>
    </recommendedName>
    <alternativeName>
        <fullName evidence="1">Phosphohexokinase</fullName>
    </alternativeName>
</protein>
<proteinExistence type="inferred from homology"/>
<accession>A3CM69</accession>
<keyword id="KW-0021">Allosteric enzyme</keyword>
<keyword id="KW-0067">ATP-binding</keyword>
<keyword id="KW-0963">Cytoplasm</keyword>
<keyword id="KW-0324">Glycolysis</keyword>
<keyword id="KW-0418">Kinase</keyword>
<keyword id="KW-0460">Magnesium</keyword>
<keyword id="KW-0479">Metal-binding</keyword>
<keyword id="KW-0547">Nucleotide-binding</keyword>
<keyword id="KW-1185">Reference proteome</keyword>
<keyword id="KW-0808">Transferase</keyword>
<organism>
    <name type="scientific">Streptococcus sanguinis (strain SK36)</name>
    <dbReference type="NCBI Taxonomy" id="388919"/>
    <lineage>
        <taxon>Bacteria</taxon>
        <taxon>Bacillati</taxon>
        <taxon>Bacillota</taxon>
        <taxon>Bacilli</taxon>
        <taxon>Lactobacillales</taxon>
        <taxon>Streptococcaceae</taxon>
        <taxon>Streptococcus</taxon>
    </lineage>
</organism>
<sequence length="336" mass="35512">MKRIAVLTSGGDAPGMNAAIRAVVRKAISEGMEVYGIYDGYAGMVAGEIYPLDATSVGDIISRGGTFLHSARYPEFAQVEGQLKGIEQLKKHGIEGVVVIGGDGSYHGAMRLTEHGFPAVGVPGTIDNDIVGTDFTIGFDTAVTTAMDAIDKIRDTSSSHRRTFVIEVMGRNAGDIALWAGIASGADEIIVPEEGFKIEEVVESIKNGYAKGKKHNIIVLAEGVMSADEFAEKLKEAGDMSDLRVTELGHIQRGGSPTARDRVLASRMGAHAVKLLKEGIGGVAVGIRNEQMVESPILGTAEEGALFSLTAEGKIVVNNPHKADLDLADLNRSINI</sequence>
<dbReference type="EC" id="2.7.1.11" evidence="1"/>
<dbReference type="EMBL" id="CP000387">
    <property type="protein sequence ID" value="ABN44274.1"/>
    <property type="molecule type" value="Genomic_DNA"/>
</dbReference>
<dbReference type="RefSeq" id="WP_002895919.1">
    <property type="nucleotide sequence ID" value="NZ_CAXTYR010000001.1"/>
</dbReference>
<dbReference type="RefSeq" id="YP_001034824.1">
    <property type="nucleotide sequence ID" value="NC_009009.1"/>
</dbReference>
<dbReference type="SMR" id="A3CM69"/>
<dbReference type="STRING" id="388919.SSA_0847"/>
<dbReference type="GeneID" id="48425267"/>
<dbReference type="KEGG" id="ssa:SSA_0847"/>
<dbReference type="PATRIC" id="fig|388919.9.peg.809"/>
<dbReference type="eggNOG" id="COG0205">
    <property type="taxonomic scope" value="Bacteria"/>
</dbReference>
<dbReference type="HOGENOM" id="CLU_020655_0_1_9"/>
<dbReference type="OrthoDB" id="9802503at2"/>
<dbReference type="UniPathway" id="UPA00109">
    <property type="reaction ID" value="UER00182"/>
</dbReference>
<dbReference type="Proteomes" id="UP000002148">
    <property type="component" value="Chromosome"/>
</dbReference>
<dbReference type="GO" id="GO:0005945">
    <property type="term" value="C:6-phosphofructokinase complex"/>
    <property type="evidence" value="ECO:0007669"/>
    <property type="project" value="TreeGrafter"/>
</dbReference>
<dbReference type="GO" id="GO:0003872">
    <property type="term" value="F:6-phosphofructokinase activity"/>
    <property type="evidence" value="ECO:0007669"/>
    <property type="project" value="UniProtKB-UniRule"/>
</dbReference>
<dbReference type="GO" id="GO:0016208">
    <property type="term" value="F:AMP binding"/>
    <property type="evidence" value="ECO:0007669"/>
    <property type="project" value="TreeGrafter"/>
</dbReference>
<dbReference type="GO" id="GO:0005524">
    <property type="term" value="F:ATP binding"/>
    <property type="evidence" value="ECO:0007669"/>
    <property type="project" value="UniProtKB-KW"/>
</dbReference>
<dbReference type="GO" id="GO:0070095">
    <property type="term" value="F:fructose-6-phosphate binding"/>
    <property type="evidence" value="ECO:0007669"/>
    <property type="project" value="TreeGrafter"/>
</dbReference>
<dbReference type="GO" id="GO:0042802">
    <property type="term" value="F:identical protein binding"/>
    <property type="evidence" value="ECO:0007669"/>
    <property type="project" value="TreeGrafter"/>
</dbReference>
<dbReference type="GO" id="GO:0046872">
    <property type="term" value="F:metal ion binding"/>
    <property type="evidence" value="ECO:0007669"/>
    <property type="project" value="UniProtKB-KW"/>
</dbReference>
<dbReference type="GO" id="GO:0048029">
    <property type="term" value="F:monosaccharide binding"/>
    <property type="evidence" value="ECO:0007669"/>
    <property type="project" value="TreeGrafter"/>
</dbReference>
<dbReference type="GO" id="GO:0061621">
    <property type="term" value="P:canonical glycolysis"/>
    <property type="evidence" value="ECO:0007669"/>
    <property type="project" value="TreeGrafter"/>
</dbReference>
<dbReference type="GO" id="GO:0030388">
    <property type="term" value="P:fructose 1,6-bisphosphate metabolic process"/>
    <property type="evidence" value="ECO:0007669"/>
    <property type="project" value="TreeGrafter"/>
</dbReference>
<dbReference type="GO" id="GO:0006002">
    <property type="term" value="P:fructose 6-phosphate metabolic process"/>
    <property type="evidence" value="ECO:0007669"/>
    <property type="project" value="InterPro"/>
</dbReference>
<dbReference type="CDD" id="cd00763">
    <property type="entry name" value="Bacterial_PFK"/>
    <property type="match status" value="1"/>
</dbReference>
<dbReference type="FunFam" id="3.40.50.450:FF:000001">
    <property type="entry name" value="ATP-dependent 6-phosphofructokinase"/>
    <property type="match status" value="1"/>
</dbReference>
<dbReference type="FunFam" id="3.40.50.460:FF:000002">
    <property type="entry name" value="ATP-dependent 6-phosphofructokinase"/>
    <property type="match status" value="1"/>
</dbReference>
<dbReference type="Gene3D" id="3.40.50.450">
    <property type="match status" value="1"/>
</dbReference>
<dbReference type="Gene3D" id="3.40.50.460">
    <property type="entry name" value="Phosphofructokinase domain"/>
    <property type="match status" value="1"/>
</dbReference>
<dbReference type="HAMAP" id="MF_00339">
    <property type="entry name" value="Phosphofructokinase_I_B1"/>
    <property type="match status" value="1"/>
</dbReference>
<dbReference type="InterPro" id="IPR022953">
    <property type="entry name" value="ATP_PFK"/>
</dbReference>
<dbReference type="InterPro" id="IPR012003">
    <property type="entry name" value="ATP_PFK_prok-type"/>
</dbReference>
<dbReference type="InterPro" id="IPR012828">
    <property type="entry name" value="PFKA_ATP_prok"/>
</dbReference>
<dbReference type="InterPro" id="IPR015912">
    <property type="entry name" value="Phosphofructokinase_CS"/>
</dbReference>
<dbReference type="InterPro" id="IPR000023">
    <property type="entry name" value="Phosphofructokinase_dom"/>
</dbReference>
<dbReference type="InterPro" id="IPR035966">
    <property type="entry name" value="PKF_sf"/>
</dbReference>
<dbReference type="NCBIfam" id="TIGR02482">
    <property type="entry name" value="PFKA_ATP"/>
    <property type="match status" value="1"/>
</dbReference>
<dbReference type="NCBIfam" id="NF002872">
    <property type="entry name" value="PRK03202.1"/>
    <property type="match status" value="1"/>
</dbReference>
<dbReference type="PANTHER" id="PTHR13697:SF4">
    <property type="entry name" value="ATP-DEPENDENT 6-PHOSPHOFRUCTOKINASE"/>
    <property type="match status" value="1"/>
</dbReference>
<dbReference type="PANTHER" id="PTHR13697">
    <property type="entry name" value="PHOSPHOFRUCTOKINASE"/>
    <property type="match status" value="1"/>
</dbReference>
<dbReference type="Pfam" id="PF00365">
    <property type="entry name" value="PFK"/>
    <property type="match status" value="1"/>
</dbReference>
<dbReference type="PIRSF" id="PIRSF000532">
    <property type="entry name" value="ATP_PFK_prok"/>
    <property type="match status" value="1"/>
</dbReference>
<dbReference type="PRINTS" id="PR00476">
    <property type="entry name" value="PHFRCTKINASE"/>
</dbReference>
<dbReference type="SUPFAM" id="SSF53784">
    <property type="entry name" value="Phosphofructokinase"/>
    <property type="match status" value="1"/>
</dbReference>
<dbReference type="PROSITE" id="PS00433">
    <property type="entry name" value="PHOSPHOFRUCTOKINASE"/>
    <property type="match status" value="1"/>
</dbReference>
<feature type="chain" id="PRO_1000059801" description="ATP-dependent 6-phosphofructokinase">
    <location>
        <begin position="1"/>
        <end position="336"/>
    </location>
</feature>
<feature type="active site" description="Proton acceptor" evidence="1">
    <location>
        <position position="127"/>
    </location>
</feature>
<feature type="binding site" evidence="1">
    <location>
        <position position="11"/>
    </location>
    <ligand>
        <name>ATP</name>
        <dbReference type="ChEBI" id="CHEBI:30616"/>
    </ligand>
</feature>
<feature type="binding site" evidence="1">
    <location>
        <begin position="21"/>
        <end position="25"/>
    </location>
    <ligand>
        <name>ADP</name>
        <dbReference type="ChEBI" id="CHEBI:456216"/>
        <note>allosteric activator; ligand shared between dimeric partners</note>
    </ligand>
</feature>
<feature type="binding site" evidence="1">
    <location>
        <begin position="72"/>
        <end position="73"/>
    </location>
    <ligand>
        <name>ATP</name>
        <dbReference type="ChEBI" id="CHEBI:30616"/>
    </ligand>
</feature>
<feature type="binding site" evidence="1">
    <location>
        <begin position="102"/>
        <end position="105"/>
    </location>
    <ligand>
        <name>ATP</name>
        <dbReference type="ChEBI" id="CHEBI:30616"/>
    </ligand>
</feature>
<feature type="binding site" evidence="1">
    <location>
        <position position="103"/>
    </location>
    <ligand>
        <name>Mg(2+)</name>
        <dbReference type="ChEBI" id="CHEBI:18420"/>
        <note>catalytic</note>
    </ligand>
</feature>
<feature type="binding site" description="in other chain" evidence="1">
    <location>
        <begin position="125"/>
        <end position="127"/>
    </location>
    <ligand>
        <name>substrate</name>
        <note>ligand shared between dimeric partners</note>
    </ligand>
</feature>
<feature type="binding site" description="in other chain" evidence="1">
    <location>
        <position position="154"/>
    </location>
    <ligand>
        <name>ADP</name>
        <dbReference type="ChEBI" id="CHEBI:456216"/>
        <note>allosteric activator; ligand shared between dimeric partners</note>
    </ligand>
</feature>
<feature type="binding site" evidence="1">
    <location>
        <position position="162"/>
    </location>
    <ligand>
        <name>substrate</name>
        <note>ligand shared between dimeric partners</note>
    </ligand>
</feature>
<feature type="binding site" description="in other chain" evidence="1">
    <location>
        <begin position="169"/>
        <end position="171"/>
    </location>
    <ligand>
        <name>substrate</name>
        <note>ligand shared between dimeric partners</note>
    </ligand>
</feature>
<feature type="binding site" description="in other chain" evidence="1">
    <location>
        <begin position="185"/>
        <end position="187"/>
    </location>
    <ligand>
        <name>ADP</name>
        <dbReference type="ChEBI" id="CHEBI:456216"/>
        <note>allosteric activator; ligand shared between dimeric partners</note>
    </ligand>
</feature>
<feature type="binding site" description="in other chain" evidence="1">
    <location>
        <position position="211"/>
    </location>
    <ligand>
        <name>ADP</name>
        <dbReference type="ChEBI" id="CHEBI:456216"/>
        <note>allosteric activator; ligand shared between dimeric partners</note>
    </ligand>
</feature>
<feature type="binding site" description="in other chain" evidence="1">
    <location>
        <begin position="213"/>
        <end position="215"/>
    </location>
    <ligand>
        <name>ADP</name>
        <dbReference type="ChEBI" id="CHEBI:456216"/>
        <note>allosteric activator; ligand shared between dimeric partners</note>
    </ligand>
</feature>
<feature type="binding site" description="in other chain" evidence="1">
    <location>
        <position position="222"/>
    </location>
    <ligand>
        <name>substrate</name>
        <note>ligand shared between dimeric partners</note>
    </ligand>
</feature>
<feature type="binding site" evidence="1">
    <location>
        <position position="244"/>
    </location>
    <ligand>
        <name>substrate</name>
        <note>ligand shared between dimeric partners</note>
    </ligand>
</feature>
<feature type="binding site" description="in other chain" evidence="1">
    <location>
        <begin position="250"/>
        <end position="253"/>
    </location>
    <ligand>
        <name>substrate</name>
        <note>ligand shared between dimeric partners</note>
    </ligand>
</feature>
<gene>
    <name evidence="1" type="primary">pfkA</name>
    <name type="ordered locus">SSA_0847</name>
</gene>
<comment type="function">
    <text evidence="1">Catalyzes the phosphorylation of D-fructose 6-phosphate to fructose 1,6-bisphosphate by ATP, the first committing step of glycolysis.</text>
</comment>
<comment type="catalytic activity">
    <reaction evidence="1">
        <text>beta-D-fructose 6-phosphate + ATP = beta-D-fructose 1,6-bisphosphate + ADP + H(+)</text>
        <dbReference type="Rhea" id="RHEA:16109"/>
        <dbReference type="ChEBI" id="CHEBI:15378"/>
        <dbReference type="ChEBI" id="CHEBI:30616"/>
        <dbReference type="ChEBI" id="CHEBI:32966"/>
        <dbReference type="ChEBI" id="CHEBI:57634"/>
        <dbReference type="ChEBI" id="CHEBI:456216"/>
        <dbReference type="EC" id="2.7.1.11"/>
    </reaction>
</comment>
<comment type="cofactor">
    <cofactor evidence="1">
        <name>Mg(2+)</name>
        <dbReference type="ChEBI" id="CHEBI:18420"/>
    </cofactor>
</comment>
<comment type="activity regulation">
    <text evidence="1">Allosterically activated by ADP and other diphosphonucleosides, and allosterically inhibited by phosphoenolpyruvate.</text>
</comment>
<comment type="pathway">
    <text evidence="1">Carbohydrate degradation; glycolysis; D-glyceraldehyde 3-phosphate and glycerone phosphate from D-glucose: step 3/4.</text>
</comment>
<comment type="subunit">
    <text evidence="1">Homotetramer.</text>
</comment>
<comment type="subcellular location">
    <subcellularLocation>
        <location evidence="1">Cytoplasm</location>
    </subcellularLocation>
</comment>
<comment type="similarity">
    <text evidence="1">Belongs to the phosphofructokinase type A (PFKA) family. ATP-dependent PFK group I subfamily. Prokaryotic clade 'B1' sub-subfamily.</text>
</comment>
<reference key="1">
    <citation type="journal article" date="2007" name="J. Bacteriol.">
        <title>Genome of the opportunistic pathogen Streptococcus sanguinis.</title>
        <authorList>
            <person name="Xu P."/>
            <person name="Alves J.M."/>
            <person name="Kitten T."/>
            <person name="Brown A."/>
            <person name="Chen Z."/>
            <person name="Ozaki L.S."/>
            <person name="Manque P."/>
            <person name="Ge X."/>
            <person name="Serrano M.G."/>
            <person name="Puiu D."/>
            <person name="Hendricks S."/>
            <person name="Wang Y."/>
            <person name="Chaplin M.D."/>
            <person name="Akan D."/>
            <person name="Paik S."/>
            <person name="Peterson D.L."/>
            <person name="Macrina F.L."/>
            <person name="Buck G.A."/>
        </authorList>
    </citation>
    <scope>NUCLEOTIDE SEQUENCE [LARGE SCALE GENOMIC DNA]</scope>
    <source>
        <strain>SK36</strain>
    </source>
</reference>
<evidence type="ECO:0000255" key="1">
    <source>
        <dbReference type="HAMAP-Rule" id="MF_00339"/>
    </source>
</evidence>
<name>PFKA_STRSV</name>